<feature type="chain" id="PRO_1000056133" description="Bifunctional protein GlmU">
    <location>
        <begin position="1"/>
        <end position="476"/>
    </location>
</feature>
<feature type="region of interest" description="Pyrophosphorylase" evidence="1">
    <location>
        <begin position="1"/>
        <end position="235"/>
    </location>
</feature>
<feature type="region of interest" description="Linker" evidence="1">
    <location>
        <begin position="236"/>
        <end position="256"/>
    </location>
</feature>
<feature type="region of interest" description="N-acetyltransferase" evidence="1">
    <location>
        <begin position="257"/>
        <end position="476"/>
    </location>
</feature>
<feature type="active site" description="Proton acceptor" evidence="1">
    <location>
        <position position="381"/>
    </location>
</feature>
<feature type="binding site" evidence="1">
    <location>
        <position position="23"/>
    </location>
    <ligand>
        <name>UDP-N-acetyl-alpha-D-glucosamine</name>
        <dbReference type="ChEBI" id="CHEBI:57705"/>
    </ligand>
</feature>
<feature type="binding site" evidence="1">
    <location>
        <position position="81"/>
    </location>
    <ligand>
        <name>UDP-N-acetyl-alpha-D-glucosamine</name>
        <dbReference type="ChEBI" id="CHEBI:57705"/>
    </ligand>
</feature>
<feature type="binding site" evidence="1">
    <location>
        <begin position="86"/>
        <end position="87"/>
    </location>
    <ligand>
        <name>UDP-N-acetyl-alpha-D-glucosamine</name>
        <dbReference type="ChEBI" id="CHEBI:57705"/>
    </ligand>
</feature>
<feature type="binding site" evidence="1">
    <location>
        <begin position="108"/>
        <end position="110"/>
    </location>
    <ligand>
        <name>UDP-N-acetyl-alpha-D-glucosamine</name>
        <dbReference type="ChEBI" id="CHEBI:57705"/>
    </ligand>
</feature>
<feature type="binding site" evidence="1">
    <location>
        <position position="110"/>
    </location>
    <ligand>
        <name>Mg(2+)</name>
        <dbReference type="ChEBI" id="CHEBI:18420"/>
    </ligand>
</feature>
<feature type="binding site" evidence="1">
    <location>
        <position position="145"/>
    </location>
    <ligand>
        <name>UDP-N-acetyl-alpha-D-glucosamine</name>
        <dbReference type="ChEBI" id="CHEBI:57705"/>
    </ligand>
</feature>
<feature type="binding site" evidence="1">
    <location>
        <position position="160"/>
    </location>
    <ligand>
        <name>UDP-N-acetyl-alpha-D-glucosamine</name>
        <dbReference type="ChEBI" id="CHEBI:57705"/>
    </ligand>
</feature>
<feature type="binding site" evidence="1">
    <location>
        <position position="233"/>
    </location>
    <ligand>
        <name>Mg(2+)</name>
        <dbReference type="ChEBI" id="CHEBI:18420"/>
    </ligand>
</feature>
<feature type="binding site" evidence="1">
    <location>
        <position position="233"/>
    </location>
    <ligand>
        <name>UDP-N-acetyl-alpha-D-glucosamine</name>
        <dbReference type="ChEBI" id="CHEBI:57705"/>
    </ligand>
</feature>
<feature type="binding site" evidence="1">
    <location>
        <position position="351"/>
    </location>
    <ligand>
        <name>UDP-N-acetyl-alpha-D-glucosamine</name>
        <dbReference type="ChEBI" id="CHEBI:57705"/>
    </ligand>
</feature>
<feature type="binding site" evidence="1">
    <location>
        <position position="369"/>
    </location>
    <ligand>
        <name>UDP-N-acetyl-alpha-D-glucosamine</name>
        <dbReference type="ChEBI" id="CHEBI:57705"/>
    </ligand>
</feature>
<feature type="binding site" evidence="1">
    <location>
        <position position="384"/>
    </location>
    <ligand>
        <name>UDP-N-acetyl-alpha-D-glucosamine</name>
        <dbReference type="ChEBI" id="CHEBI:57705"/>
    </ligand>
</feature>
<feature type="binding site" evidence="1">
    <location>
        <position position="395"/>
    </location>
    <ligand>
        <name>UDP-N-acetyl-alpha-D-glucosamine</name>
        <dbReference type="ChEBI" id="CHEBI:57705"/>
    </ligand>
</feature>
<feature type="binding site" evidence="1">
    <location>
        <position position="398"/>
    </location>
    <ligand>
        <name>acetyl-CoA</name>
        <dbReference type="ChEBI" id="CHEBI:57288"/>
    </ligand>
</feature>
<feature type="binding site" evidence="1">
    <location>
        <begin position="404"/>
        <end position="405"/>
    </location>
    <ligand>
        <name>acetyl-CoA</name>
        <dbReference type="ChEBI" id="CHEBI:57288"/>
    </ligand>
</feature>
<feature type="binding site" evidence="1">
    <location>
        <position position="423"/>
    </location>
    <ligand>
        <name>acetyl-CoA</name>
        <dbReference type="ChEBI" id="CHEBI:57288"/>
    </ligand>
</feature>
<feature type="binding site" evidence="1">
    <location>
        <position position="441"/>
    </location>
    <ligand>
        <name>acetyl-CoA</name>
        <dbReference type="ChEBI" id="CHEBI:57288"/>
    </ligand>
</feature>
<feature type="binding site" evidence="1">
    <location>
        <position position="458"/>
    </location>
    <ligand>
        <name>acetyl-CoA</name>
        <dbReference type="ChEBI" id="CHEBI:57288"/>
    </ligand>
</feature>
<evidence type="ECO:0000255" key="1">
    <source>
        <dbReference type="HAMAP-Rule" id="MF_01631"/>
    </source>
</evidence>
<sequence>MTALDIIIMAAGKGTRMKSRIPKVLQRLAGRPLLHHVLGQAASLQARRVVVVTGHGATEVEAACAGSAGVGGTFDLKFVRQEPQLGTGHAVQQATPALAGDGTVVVLSGDVPLTQAATLRALVEAGAGERLALLTVRLPDPTGYGRIVRGEGGTVQRIVEHKDANDAERAIDEVYSGIMAVPAQRLAGWLARLTNDNAQGEYYLTDIVSMAVADGVPVAAHCIGDALQVAGVNSPAQLADLERAHQRAQAAALMEQGVRLADPARFDLRDDARSGARGEILCAQDVEIDVGCIFTGRVELGEGARIGAYCHISNATIAAGAVVHPFTHIDGEKTGAHVGEGALIGPFARLRPGAQLGREVHIGNFVEVKNSTLADGAKANHLAYLGDASVGERVNYGAGSITANYDGANKHRTVIEADVHIGSNCVLVAPVTIGAGGTVGGGSTITKDTPPGGLSVARGRQVSIANWKRPAKQAKG</sequence>
<keyword id="KW-0012">Acyltransferase</keyword>
<keyword id="KW-0133">Cell shape</keyword>
<keyword id="KW-0961">Cell wall biogenesis/degradation</keyword>
<keyword id="KW-0963">Cytoplasm</keyword>
<keyword id="KW-0460">Magnesium</keyword>
<keyword id="KW-0479">Metal-binding</keyword>
<keyword id="KW-0511">Multifunctional enzyme</keyword>
<keyword id="KW-0548">Nucleotidyltransferase</keyword>
<keyword id="KW-0573">Peptidoglycan synthesis</keyword>
<keyword id="KW-0677">Repeat</keyword>
<keyword id="KW-0808">Transferase</keyword>
<protein>
    <recommendedName>
        <fullName evidence="1">Bifunctional protein GlmU</fullName>
    </recommendedName>
    <domain>
        <recommendedName>
            <fullName evidence="1">UDP-N-acetylglucosamine pyrophosphorylase</fullName>
            <ecNumber evidence="1">2.7.7.23</ecNumber>
        </recommendedName>
        <alternativeName>
            <fullName evidence="1">N-acetylglucosamine-1-phosphate uridyltransferase</fullName>
        </alternativeName>
    </domain>
    <domain>
        <recommendedName>
            <fullName evidence="1">Glucosamine-1-phosphate N-acetyltransferase</fullName>
            <ecNumber evidence="1">2.3.1.157</ecNumber>
        </recommendedName>
    </domain>
</protein>
<name>GLMU_ACISJ</name>
<dbReference type="EC" id="2.7.7.23" evidence="1"/>
<dbReference type="EC" id="2.3.1.157" evidence="1"/>
<dbReference type="EMBL" id="CP000539">
    <property type="protein sequence ID" value="ABM40882.1"/>
    <property type="molecule type" value="Genomic_DNA"/>
</dbReference>
<dbReference type="SMR" id="A1W3Q7"/>
<dbReference type="STRING" id="232721.Ajs_0636"/>
<dbReference type="KEGG" id="ajs:Ajs_0636"/>
<dbReference type="eggNOG" id="COG1207">
    <property type="taxonomic scope" value="Bacteria"/>
</dbReference>
<dbReference type="HOGENOM" id="CLU_029499_15_2_4"/>
<dbReference type="UniPathway" id="UPA00113">
    <property type="reaction ID" value="UER00532"/>
</dbReference>
<dbReference type="UniPathway" id="UPA00113">
    <property type="reaction ID" value="UER00533"/>
</dbReference>
<dbReference type="UniPathway" id="UPA00973"/>
<dbReference type="Proteomes" id="UP000000645">
    <property type="component" value="Chromosome"/>
</dbReference>
<dbReference type="GO" id="GO:0005737">
    <property type="term" value="C:cytoplasm"/>
    <property type="evidence" value="ECO:0007669"/>
    <property type="project" value="UniProtKB-SubCell"/>
</dbReference>
<dbReference type="GO" id="GO:0016020">
    <property type="term" value="C:membrane"/>
    <property type="evidence" value="ECO:0007669"/>
    <property type="project" value="GOC"/>
</dbReference>
<dbReference type="GO" id="GO:0019134">
    <property type="term" value="F:glucosamine-1-phosphate N-acetyltransferase activity"/>
    <property type="evidence" value="ECO:0007669"/>
    <property type="project" value="UniProtKB-UniRule"/>
</dbReference>
<dbReference type="GO" id="GO:0000287">
    <property type="term" value="F:magnesium ion binding"/>
    <property type="evidence" value="ECO:0007669"/>
    <property type="project" value="UniProtKB-UniRule"/>
</dbReference>
<dbReference type="GO" id="GO:0003977">
    <property type="term" value="F:UDP-N-acetylglucosamine diphosphorylase activity"/>
    <property type="evidence" value="ECO:0007669"/>
    <property type="project" value="UniProtKB-UniRule"/>
</dbReference>
<dbReference type="GO" id="GO:0000902">
    <property type="term" value="P:cell morphogenesis"/>
    <property type="evidence" value="ECO:0007669"/>
    <property type="project" value="UniProtKB-UniRule"/>
</dbReference>
<dbReference type="GO" id="GO:0071555">
    <property type="term" value="P:cell wall organization"/>
    <property type="evidence" value="ECO:0007669"/>
    <property type="project" value="UniProtKB-KW"/>
</dbReference>
<dbReference type="GO" id="GO:0009245">
    <property type="term" value="P:lipid A biosynthetic process"/>
    <property type="evidence" value="ECO:0007669"/>
    <property type="project" value="UniProtKB-UniRule"/>
</dbReference>
<dbReference type="GO" id="GO:0009252">
    <property type="term" value="P:peptidoglycan biosynthetic process"/>
    <property type="evidence" value="ECO:0007669"/>
    <property type="project" value="UniProtKB-UniRule"/>
</dbReference>
<dbReference type="GO" id="GO:0008360">
    <property type="term" value="P:regulation of cell shape"/>
    <property type="evidence" value="ECO:0007669"/>
    <property type="project" value="UniProtKB-KW"/>
</dbReference>
<dbReference type="GO" id="GO:0006048">
    <property type="term" value="P:UDP-N-acetylglucosamine biosynthetic process"/>
    <property type="evidence" value="ECO:0007669"/>
    <property type="project" value="UniProtKB-UniPathway"/>
</dbReference>
<dbReference type="CDD" id="cd02540">
    <property type="entry name" value="GT2_GlmU_N_bac"/>
    <property type="match status" value="1"/>
</dbReference>
<dbReference type="CDD" id="cd03353">
    <property type="entry name" value="LbH_GlmU_C"/>
    <property type="match status" value="1"/>
</dbReference>
<dbReference type="Gene3D" id="2.160.10.10">
    <property type="entry name" value="Hexapeptide repeat proteins"/>
    <property type="match status" value="1"/>
</dbReference>
<dbReference type="Gene3D" id="3.90.550.10">
    <property type="entry name" value="Spore Coat Polysaccharide Biosynthesis Protein SpsA, Chain A"/>
    <property type="match status" value="1"/>
</dbReference>
<dbReference type="HAMAP" id="MF_01631">
    <property type="entry name" value="GlmU"/>
    <property type="match status" value="1"/>
</dbReference>
<dbReference type="InterPro" id="IPR005882">
    <property type="entry name" value="Bifunctional_GlmU"/>
</dbReference>
<dbReference type="InterPro" id="IPR050065">
    <property type="entry name" value="GlmU-like"/>
</dbReference>
<dbReference type="InterPro" id="IPR038009">
    <property type="entry name" value="GlmU_C_LbH"/>
</dbReference>
<dbReference type="InterPro" id="IPR001451">
    <property type="entry name" value="Hexapep"/>
</dbReference>
<dbReference type="InterPro" id="IPR025877">
    <property type="entry name" value="MobA-like_NTP_Trfase"/>
</dbReference>
<dbReference type="InterPro" id="IPR029044">
    <property type="entry name" value="Nucleotide-diphossugar_trans"/>
</dbReference>
<dbReference type="InterPro" id="IPR011004">
    <property type="entry name" value="Trimer_LpxA-like_sf"/>
</dbReference>
<dbReference type="NCBIfam" id="TIGR01173">
    <property type="entry name" value="glmU"/>
    <property type="match status" value="1"/>
</dbReference>
<dbReference type="PANTHER" id="PTHR43584:SF3">
    <property type="entry name" value="BIFUNCTIONAL PROTEIN GLMU"/>
    <property type="match status" value="1"/>
</dbReference>
<dbReference type="PANTHER" id="PTHR43584">
    <property type="entry name" value="NUCLEOTIDYL TRANSFERASE"/>
    <property type="match status" value="1"/>
</dbReference>
<dbReference type="Pfam" id="PF00132">
    <property type="entry name" value="Hexapep"/>
    <property type="match status" value="2"/>
</dbReference>
<dbReference type="Pfam" id="PF12804">
    <property type="entry name" value="NTP_transf_3"/>
    <property type="match status" value="1"/>
</dbReference>
<dbReference type="SUPFAM" id="SSF53448">
    <property type="entry name" value="Nucleotide-diphospho-sugar transferases"/>
    <property type="match status" value="1"/>
</dbReference>
<dbReference type="SUPFAM" id="SSF51161">
    <property type="entry name" value="Trimeric LpxA-like enzymes"/>
    <property type="match status" value="1"/>
</dbReference>
<accession>A1W3Q7</accession>
<reference key="1">
    <citation type="submission" date="2006-12" db="EMBL/GenBank/DDBJ databases">
        <title>Complete sequence of chromosome 1 of Acidovorax sp. JS42.</title>
        <authorList>
            <person name="Copeland A."/>
            <person name="Lucas S."/>
            <person name="Lapidus A."/>
            <person name="Barry K."/>
            <person name="Detter J.C."/>
            <person name="Glavina del Rio T."/>
            <person name="Dalin E."/>
            <person name="Tice H."/>
            <person name="Pitluck S."/>
            <person name="Chertkov O."/>
            <person name="Brettin T."/>
            <person name="Bruce D."/>
            <person name="Han C."/>
            <person name="Tapia R."/>
            <person name="Gilna P."/>
            <person name="Schmutz J."/>
            <person name="Larimer F."/>
            <person name="Land M."/>
            <person name="Hauser L."/>
            <person name="Kyrpides N."/>
            <person name="Kim E."/>
            <person name="Stahl D."/>
            <person name="Richardson P."/>
        </authorList>
    </citation>
    <scope>NUCLEOTIDE SEQUENCE [LARGE SCALE GENOMIC DNA]</scope>
    <source>
        <strain>JS42</strain>
    </source>
</reference>
<organism>
    <name type="scientific">Acidovorax sp. (strain JS42)</name>
    <dbReference type="NCBI Taxonomy" id="232721"/>
    <lineage>
        <taxon>Bacteria</taxon>
        <taxon>Pseudomonadati</taxon>
        <taxon>Pseudomonadota</taxon>
        <taxon>Betaproteobacteria</taxon>
        <taxon>Burkholderiales</taxon>
        <taxon>Comamonadaceae</taxon>
        <taxon>Acidovorax</taxon>
    </lineage>
</organism>
<gene>
    <name evidence="1" type="primary">glmU</name>
    <name type="ordered locus">Ajs_0636</name>
</gene>
<proteinExistence type="inferred from homology"/>
<comment type="function">
    <text evidence="1">Catalyzes the last two sequential reactions in the de novo biosynthetic pathway for UDP-N-acetylglucosamine (UDP-GlcNAc). The C-terminal domain catalyzes the transfer of acetyl group from acetyl coenzyme A to glucosamine-1-phosphate (GlcN-1-P) to produce N-acetylglucosamine-1-phosphate (GlcNAc-1-P), which is converted into UDP-GlcNAc by the transfer of uridine 5-monophosphate (from uridine 5-triphosphate), a reaction catalyzed by the N-terminal domain.</text>
</comment>
<comment type="catalytic activity">
    <reaction evidence="1">
        <text>alpha-D-glucosamine 1-phosphate + acetyl-CoA = N-acetyl-alpha-D-glucosamine 1-phosphate + CoA + H(+)</text>
        <dbReference type="Rhea" id="RHEA:13725"/>
        <dbReference type="ChEBI" id="CHEBI:15378"/>
        <dbReference type="ChEBI" id="CHEBI:57287"/>
        <dbReference type="ChEBI" id="CHEBI:57288"/>
        <dbReference type="ChEBI" id="CHEBI:57776"/>
        <dbReference type="ChEBI" id="CHEBI:58516"/>
        <dbReference type="EC" id="2.3.1.157"/>
    </reaction>
</comment>
<comment type="catalytic activity">
    <reaction evidence="1">
        <text>N-acetyl-alpha-D-glucosamine 1-phosphate + UTP + H(+) = UDP-N-acetyl-alpha-D-glucosamine + diphosphate</text>
        <dbReference type="Rhea" id="RHEA:13509"/>
        <dbReference type="ChEBI" id="CHEBI:15378"/>
        <dbReference type="ChEBI" id="CHEBI:33019"/>
        <dbReference type="ChEBI" id="CHEBI:46398"/>
        <dbReference type="ChEBI" id="CHEBI:57705"/>
        <dbReference type="ChEBI" id="CHEBI:57776"/>
        <dbReference type="EC" id="2.7.7.23"/>
    </reaction>
</comment>
<comment type="cofactor">
    <cofactor evidence="1">
        <name>Mg(2+)</name>
        <dbReference type="ChEBI" id="CHEBI:18420"/>
    </cofactor>
    <text evidence="1">Binds 1 Mg(2+) ion per subunit.</text>
</comment>
<comment type="pathway">
    <text evidence="1">Nucleotide-sugar biosynthesis; UDP-N-acetyl-alpha-D-glucosamine biosynthesis; N-acetyl-alpha-D-glucosamine 1-phosphate from alpha-D-glucosamine 6-phosphate (route II): step 2/2.</text>
</comment>
<comment type="pathway">
    <text evidence="1">Nucleotide-sugar biosynthesis; UDP-N-acetyl-alpha-D-glucosamine biosynthesis; UDP-N-acetyl-alpha-D-glucosamine from N-acetyl-alpha-D-glucosamine 1-phosphate: step 1/1.</text>
</comment>
<comment type="pathway">
    <text evidence="1">Bacterial outer membrane biogenesis; LPS lipid A biosynthesis.</text>
</comment>
<comment type="subunit">
    <text evidence="1">Homotrimer.</text>
</comment>
<comment type="subcellular location">
    <subcellularLocation>
        <location evidence="1">Cytoplasm</location>
    </subcellularLocation>
</comment>
<comment type="similarity">
    <text evidence="1">In the N-terminal section; belongs to the N-acetylglucosamine-1-phosphate uridyltransferase family.</text>
</comment>
<comment type="similarity">
    <text evidence="1">In the C-terminal section; belongs to the transferase hexapeptide repeat family.</text>
</comment>